<feature type="signal peptide" evidence="2">
    <location>
        <begin position="1"/>
        <end position="26"/>
    </location>
</feature>
<feature type="chain" id="PRO_0000386570" description="Protein cueball" evidence="2">
    <location>
        <begin position="27"/>
        <end position="644"/>
    </location>
</feature>
<feature type="topological domain" description="Extracellular" evidence="2">
    <location>
        <begin position="27"/>
        <end position="531"/>
    </location>
</feature>
<feature type="transmembrane region" description="Helical" evidence="2">
    <location>
        <begin position="532"/>
        <end position="552"/>
    </location>
</feature>
<feature type="topological domain" description="Cytoplasmic" evidence="2">
    <location>
        <begin position="553"/>
        <end position="644"/>
    </location>
</feature>
<feature type="repeat" description="LDL-receptor class B 1" evidence="2">
    <location>
        <begin position="121"/>
        <end position="166"/>
    </location>
</feature>
<feature type="repeat" description="LDL-receptor class B 2" evidence="2">
    <location>
        <begin position="167"/>
        <end position="211"/>
    </location>
</feature>
<feature type="repeat" description="LDL-receptor class B 3" evidence="2">
    <location>
        <begin position="212"/>
        <end position="257"/>
    </location>
</feature>
<feature type="domain" description="EGF-like 1" evidence="3">
    <location>
        <begin position="398"/>
        <end position="430"/>
    </location>
</feature>
<feature type="domain" description="EGF-like 2" evidence="3">
    <location>
        <begin position="433"/>
        <end position="471"/>
    </location>
</feature>
<feature type="glycosylation site" description="N-linked (GlcNAc...) asparagine" evidence="2">
    <location>
        <position position="82"/>
    </location>
</feature>
<feature type="glycosylation site" description="N-linked (GlcNAc...) asparagine" evidence="2">
    <location>
        <position position="108"/>
    </location>
</feature>
<feature type="glycosylation site" description="N-linked (GlcNAc...) asparagine" evidence="2">
    <location>
        <position position="175"/>
    </location>
</feature>
<feature type="glycosylation site" description="N-linked (GlcNAc...) asparagine" evidence="2">
    <location>
        <position position="190"/>
    </location>
</feature>
<feature type="glycosylation site" description="N-linked (GlcNAc...) asparagine" evidence="2">
    <location>
        <position position="196"/>
    </location>
</feature>
<feature type="glycosylation site" description="N-linked (GlcNAc...) asparagine" evidence="2">
    <location>
        <position position="313"/>
    </location>
</feature>
<feature type="glycosylation site" description="N-linked (GlcNAc...) asparagine" evidence="2">
    <location>
        <position position="473"/>
    </location>
</feature>
<feature type="glycosylation site" description="N-linked (GlcNAc...) asparagine" evidence="2">
    <location>
        <position position="508"/>
    </location>
</feature>
<feature type="disulfide bond" evidence="3">
    <location>
        <begin position="402"/>
        <end position="411"/>
    </location>
</feature>
<feature type="disulfide bond" evidence="3">
    <location>
        <begin position="406"/>
        <end position="421"/>
    </location>
</feature>
<feature type="disulfide bond" evidence="3">
    <location>
        <begin position="437"/>
        <end position="447"/>
    </location>
</feature>
<feature type="disulfide bond" evidence="3">
    <location>
        <begin position="441"/>
        <end position="459"/>
    </location>
</feature>
<feature type="disulfide bond" evidence="3">
    <location>
        <begin position="461"/>
        <end position="470"/>
    </location>
</feature>
<keyword id="KW-1003">Cell membrane</keyword>
<keyword id="KW-0221">Differentiation</keyword>
<keyword id="KW-1015">Disulfide bond</keyword>
<keyword id="KW-0245">EGF-like domain</keyword>
<keyword id="KW-0325">Glycoprotein</keyword>
<keyword id="KW-0472">Membrane</keyword>
<keyword id="KW-0896">Oogenesis</keyword>
<keyword id="KW-0677">Repeat</keyword>
<keyword id="KW-0732">Signal</keyword>
<keyword id="KW-0744">Spermatogenesis</keyword>
<keyword id="KW-0812">Transmembrane</keyword>
<keyword id="KW-1133">Transmembrane helix</keyword>
<protein>
    <recommendedName>
        <fullName evidence="1">Protein cueball</fullName>
    </recommendedName>
</protein>
<accession>B3NBB6</accession>
<gene>
    <name evidence="1" type="primary">cue</name>
    <name type="ORF">GG14595</name>
</gene>
<proteinExistence type="inferred from homology"/>
<reference evidence="5" key="1">
    <citation type="journal article" date="2007" name="Nature">
        <title>Evolution of genes and genomes on the Drosophila phylogeny.</title>
        <authorList>
            <consortium name="Drosophila 12 genomes consortium"/>
        </authorList>
    </citation>
    <scope>NUCLEOTIDE SEQUENCE [LARGE SCALE GENOMIC DNA]</scope>
    <source>
        <strain evidence="5">Tucson 14021-0224.01</strain>
    </source>
</reference>
<name>CUE_DROER</name>
<evidence type="ECO:0000250" key="1">
    <source>
        <dbReference type="UniProtKB" id="Q95RU0"/>
    </source>
</evidence>
<evidence type="ECO:0000255" key="2"/>
<evidence type="ECO:0000255" key="3">
    <source>
        <dbReference type="PROSITE-ProRule" id="PRU00076"/>
    </source>
</evidence>
<evidence type="ECO:0000305" key="4"/>
<evidence type="ECO:0000312" key="5">
    <source>
        <dbReference type="EMBL" id="EDV50169.1"/>
    </source>
</evidence>
<organism>
    <name type="scientific">Drosophila erecta</name>
    <name type="common">Fruit fly</name>
    <dbReference type="NCBI Taxonomy" id="7220"/>
    <lineage>
        <taxon>Eukaryota</taxon>
        <taxon>Metazoa</taxon>
        <taxon>Ecdysozoa</taxon>
        <taxon>Arthropoda</taxon>
        <taxon>Hexapoda</taxon>
        <taxon>Insecta</taxon>
        <taxon>Pterygota</taxon>
        <taxon>Neoptera</taxon>
        <taxon>Endopterygota</taxon>
        <taxon>Diptera</taxon>
        <taxon>Brachycera</taxon>
        <taxon>Muscomorpha</taxon>
        <taxon>Ephydroidea</taxon>
        <taxon>Drosophilidae</taxon>
        <taxon>Drosophila</taxon>
        <taxon>Sophophora</taxon>
    </lineage>
</organism>
<sequence>MIRIRFGMDVLLVLLLATCLLSPAHGTPLEWDFAVTLRTKIQFMDSSWQTIATAAHEFDELSAITFDESEELIYFNDMRHQNGSIFSLKRDLVAANHVVEQRIARTGNESVGGLAYDPLTMNLFWSDIEQRKIFFAPIDGSAAPKVLVDLSAEGGRPDGVAVDVCRRKLYWTNSNVTHPTVERINLDGNNRTVIINSTIDMPRGIVVDQLSDRLFWIDDLKGVFFAIESSKLDGSDRLVVLKDKHHEPLNLAVTNDAIYWTDRTTRSVWSHPKVPVIRVTTTSKPVEEDSTDSTDFKDPEPVNEDCPLVRVANLSEEVRGIVVRTGFYQRLQKDHHCASIVRKVKERVDAQNTKFEVRSLQDQKMKILQDERCMNHGEYKPATDLCICPTGFKGSRCEIRECHNYCVHGTCQMSESAYPKCYCQPGFTGERCEVSVCAGLCLNGGHCRASKDEKEAPSCECPAKFGGARCEQNSTEICTLFCRLLKHEPEMYVPFGCHSICEELAQDNSTNIAVPQYQHLEVCLTPKVWTSSVIIILVIGIVSSLLLVAVIVHGIRRLYKPKRPRIRKTFVVRKQARTNSAGDTPLTNRPLATEQCEITIENCCNMNICETPCFDPKLVEQTLSKSSCKEDKKILIHNMEDDLY</sequence>
<dbReference type="EMBL" id="CH954178">
    <property type="protein sequence ID" value="EDV50169.1"/>
    <property type="molecule type" value="Genomic_DNA"/>
</dbReference>
<dbReference type="SMR" id="B3NBB6"/>
<dbReference type="GlyCosmos" id="B3NBB6">
    <property type="glycosylation" value="8 sites, No reported glycans"/>
</dbReference>
<dbReference type="EnsemblMetazoa" id="FBtr0134649">
    <property type="protein sequence ID" value="FBpp0133141"/>
    <property type="gene ID" value="FBgn0106851"/>
</dbReference>
<dbReference type="EnsemblMetazoa" id="XM_001971107.3">
    <property type="protein sequence ID" value="XP_001971143.1"/>
    <property type="gene ID" value="LOC6545668"/>
</dbReference>
<dbReference type="GeneID" id="6545668"/>
<dbReference type="KEGG" id="der:6545668"/>
<dbReference type="eggNOG" id="KOG1215">
    <property type="taxonomic scope" value="Eukaryota"/>
</dbReference>
<dbReference type="HOGENOM" id="CLU_026602_0_0_1"/>
<dbReference type="OMA" id="RCEQNST"/>
<dbReference type="OrthoDB" id="382013at2759"/>
<dbReference type="PhylomeDB" id="B3NBB6"/>
<dbReference type="Proteomes" id="UP000008711">
    <property type="component" value="Unassembled WGS sequence"/>
</dbReference>
<dbReference type="GO" id="GO:0005886">
    <property type="term" value="C:plasma membrane"/>
    <property type="evidence" value="ECO:0007669"/>
    <property type="project" value="UniProtKB-SubCell"/>
</dbReference>
<dbReference type="GO" id="GO:0005509">
    <property type="term" value="F:calcium ion binding"/>
    <property type="evidence" value="ECO:0007669"/>
    <property type="project" value="InterPro"/>
</dbReference>
<dbReference type="GO" id="GO:0042813">
    <property type="term" value="F:Wnt receptor activity"/>
    <property type="evidence" value="ECO:0007669"/>
    <property type="project" value="TreeGrafter"/>
</dbReference>
<dbReference type="GO" id="GO:0017147">
    <property type="term" value="F:Wnt-protein binding"/>
    <property type="evidence" value="ECO:0007669"/>
    <property type="project" value="TreeGrafter"/>
</dbReference>
<dbReference type="GO" id="GO:0060070">
    <property type="term" value="P:canonical Wnt signaling pathway"/>
    <property type="evidence" value="ECO:0007669"/>
    <property type="project" value="TreeGrafter"/>
</dbReference>
<dbReference type="GO" id="GO:0048477">
    <property type="term" value="P:oogenesis"/>
    <property type="evidence" value="ECO:0007669"/>
    <property type="project" value="UniProtKB-KW"/>
</dbReference>
<dbReference type="GO" id="GO:0007283">
    <property type="term" value="P:spermatogenesis"/>
    <property type="evidence" value="ECO:0007669"/>
    <property type="project" value="UniProtKB-KW"/>
</dbReference>
<dbReference type="CDD" id="cd00054">
    <property type="entry name" value="EGF_CA"/>
    <property type="match status" value="1"/>
</dbReference>
<dbReference type="FunFam" id="2.10.25.10:FF:000744">
    <property type="entry name" value="Delta-like protein"/>
    <property type="match status" value="1"/>
</dbReference>
<dbReference type="Gene3D" id="2.10.25.10">
    <property type="entry name" value="Laminin"/>
    <property type="match status" value="2"/>
</dbReference>
<dbReference type="Gene3D" id="2.120.10.30">
    <property type="entry name" value="TolB, C-terminal domain"/>
    <property type="match status" value="1"/>
</dbReference>
<dbReference type="InterPro" id="IPR011042">
    <property type="entry name" value="6-blade_b-propeller_TolB-like"/>
</dbReference>
<dbReference type="InterPro" id="IPR050778">
    <property type="entry name" value="Cueball_EGF_LRP_Nidogen"/>
</dbReference>
<dbReference type="InterPro" id="IPR001881">
    <property type="entry name" value="EGF-like_Ca-bd_dom"/>
</dbReference>
<dbReference type="InterPro" id="IPR000742">
    <property type="entry name" value="EGF-like_dom"/>
</dbReference>
<dbReference type="InterPro" id="IPR000033">
    <property type="entry name" value="LDLR_classB_rpt"/>
</dbReference>
<dbReference type="PANTHER" id="PTHR46513:SF42">
    <property type="entry name" value="PROTEIN CUEBALL"/>
    <property type="match status" value="1"/>
</dbReference>
<dbReference type="PANTHER" id="PTHR46513">
    <property type="entry name" value="VITELLOGENIN RECEPTOR-LIKE PROTEIN-RELATED-RELATED"/>
    <property type="match status" value="1"/>
</dbReference>
<dbReference type="Pfam" id="PF00058">
    <property type="entry name" value="Ldl_recept_b"/>
    <property type="match status" value="1"/>
</dbReference>
<dbReference type="SMART" id="SM00181">
    <property type="entry name" value="EGF"/>
    <property type="match status" value="3"/>
</dbReference>
<dbReference type="SMART" id="SM00179">
    <property type="entry name" value="EGF_CA"/>
    <property type="match status" value="1"/>
</dbReference>
<dbReference type="SMART" id="SM00135">
    <property type="entry name" value="LY"/>
    <property type="match status" value="4"/>
</dbReference>
<dbReference type="SUPFAM" id="SSF57196">
    <property type="entry name" value="EGF/Laminin"/>
    <property type="match status" value="2"/>
</dbReference>
<dbReference type="SUPFAM" id="SSF63825">
    <property type="entry name" value="YWTD domain"/>
    <property type="match status" value="1"/>
</dbReference>
<dbReference type="PROSITE" id="PS00022">
    <property type="entry name" value="EGF_1"/>
    <property type="match status" value="3"/>
</dbReference>
<dbReference type="PROSITE" id="PS01186">
    <property type="entry name" value="EGF_2"/>
    <property type="match status" value="2"/>
</dbReference>
<dbReference type="PROSITE" id="PS50026">
    <property type="entry name" value="EGF_3"/>
    <property type="match status" value="2"/>
</dbReference>
<dbReference type="PROSITE" id="PS51120">
    <property type="entry name" value="LDLRB"/>
    <property type="match status" value="3"/>
</dbReference>
<comment type="function">
    <text evidence="1">Has a role in spermatogenesis and oogenesis.</text>
</comment>
<comment type="subcellular location">
    <subcellularLocation>
        <location evidence="4">Cell membrane</location>
        <topology evidence="4">Single-pass type I membrane protein</topology>
    </subcellularLocation>
</comment>
<comment type="similarity">
    <text evidence="4">Belongs to the cueball family.</text>
</comment>